<gene>
    <name type="primary">osbA</name>
    <name type="ORF">DDB_G0280053</name>
</gene>
<dbReference type="EMBL" id="AJ488770">
    <property type="protein sequence ID" value="CAD32824.1"/>
    <property type="molecule type" value="mRNA"/>
</dbReference>
<dbReference type="EMBL" id="AAFI02000035">
    <property type="protein sequence ID" value="EAL67253.1"/>
    <property type="molecule type" value="Genomic_DNA"/>
</dbReference>
<dbReference type="RefSeq" id="XP_641237.1">
    <property type="nucleotide sequence ID" value="XM_636145.1"/>
</dbReference>
<dbReference type="SMR" id="Q8MPQ7"/>
<dbReference type="STRING" id="44689.Q8MPQ7"/>
<dbReference type="PaxDb" id="44689-DDB0214942"/>
<dbReference type="EnsemblProtists" id="EAL67253">
    <property type="protein sequence ID" value="EAL67253"/>
    <property type="gene ID" value="DDB_G0280053"/>
</dbReference>
<dbReference type="GeneID" id="8622368"/>
<dbReference type="KEGG" id="ddi:DDB_G0280053"/>
<dbReference type="dictyBase" id="DDB_G0280053">
    <property type="gene designation" value="osbA"/>
</dbReference>
<dbReference type="VEuPathDB" id="AmoebaDB:DDB_G0280053"/>
<dbReference type="eggNOG" id="KOG2210">
    <property type="taxonomic scope" value="Eukaryota"/>
</dbReference>
<dbReference type="HOGENOM" id="CLU_706815_0_0_1"/>
<dbReference type="InParanoid" id="Q8MPQ7"/>
<dbReference type="OMA" id="WEPLFFK"/>
<dbReference type="PhylomeDB" id="Q8MPQ7"/>
<dbReference type="Reactome" id="R-DDI-1482801">
    <property type="pathway name" value="Acyl chain remodelling of PS"/>
</dbReference>
<dbReference type="Reactome" id="R-DDI-9013407">
    <property type="pathway name" value="RHOH GTPase cycle"/>
</dbReference>
<dbReference type="PRO" id="PR:Q8MPQ7"/>
<dbReference type="Proteomes" id="UP000002195">
    <property type="component" value="Chromosome 3"/>
</dbReference>
<dbReference type="GO" id="GO:0071944">
    <property type="term" value="C:cell periphery"/>
    <property type="evidence" value="ECO:0000314"/>
    <property type="project" value="dictyBase"/>
</dbReference>
<dbReference type="GO" id="GO:0005829">
    <property type="term" value="C:cytosol"/>
    <property type="evidence" value="ECO:0000318"/>
    <property type="project" value="GO_Central"/>
</dbReference>
<dbReference type="GO" id="GO:0016020">
    <property type="term" value="C:membrane"/>
    <property type="evidence" value="ECO:0000318"/>
    <property type="project" value="GO_Central"/>
</dbReference>
<dbReference type="GO" id="GO:0048471">
    <property type="term" value="C:perinuclear region of cytoplasm"/>
    <property type="evidence" value="ECO:0000314"/>
    <property type="project" value="dictyBase"/>
</dbReference>
<dbReference type="GO" id="GO:0032934">
    <property type="term" value="F:sterol binding"/>
    <property type="evidence" value="ECO:0000318"/>
    <property type="project" value="GO_Central"/>
</dbReference>
<dbReference type="GO" id="GO:0031154">
    <property type="term" value="P:culmination involved in sorocarp development"/>
    <property type="evidence" value="ECO:0000315"/>
    <property type="project" value="dictyBase"/>
</dbReference>
<dbReference type="FunFam" id="2.40.160.120:FF:000011">
    <property type="entry name" value="Oxysterol-binding protein-related protein 4C"/>
    <property type="match status" value="1"/>
</dbReference>
<dbReference type="Gene3D" id="1.10.287.2720">
    <property type="match status" value="1"/>
</dbReference>
<dbReference type="Gene3D" id="2.40.160.120">
    <property type="match status" value="1"/>
</dbReference>
<dbReference type="Gene3D" id="3.30.70.3490">
    <property type="match status" value="1"/>
</dbReference>
<dbReference type="InterPro" id="IPR037239">
    <property type="entry name" value="OSBP_sf"/>
</dbReference>
<dbReference type="InterPro" id="IPR000648">
    <property type="entry name" value="Oxysterol-bd"/>
</dbReference>
<dbReference type="PANTHER" id="PTHR10972:SF78">
    <property type="entry name" value="OXYSTEROL-BINDING PROTEIN 1-RELATED"/>
    <property type="match status" value="1"/>
</dbReference>
<dbReference type="PANTHER" id="PTHR10972">
    <property type="entry name" value="OXYSTEROL-BINDING PROTEIN-RELATED"/>
    <property type="match status" value="1"/>
</dbReference>
<dbReference type="Pfam" id="PF01237">
    <property type="entry name" value="Oxysterol_BP"/>
    <property type="match status" value="1"/>
</dbReference>
<dbReference type="SUPFAM" id="SSF144000">
    <property type="entry name" value="Oxysterol-binding protein-like"/>
    <property type="match status" value="1"/>
</dbReference>
<organism>
    <name type="scientific">Dictyostelium discoideum</name>
    <name type="common">Social amoeba</name>
    <dbReference type="NCBI Taxonomy" id="44689"/>
    <lineage>
        <taxon>Eukaryota</taxon>
        <taxon>Amoebozoa</taxon>
        <taxon>Evosea</taxon>
        <taxon>Eumycetozoa</taxon>
        <taxon>Dictyostelia</taxon>
        <taxon>Dictyosteliales</taxon>
        <taxon>Dictyosteliaceae</taxon>
        <taxon>Dictyostelium</taxon>
    </lineage>
</organism>
<feature type="chain" id="PRO_0000328466" description="Oxysterol-binding protein 1">
    <location>
        <begin position="1"/>
        <end position="389"/>
    </location>
</feature>
<feature type="region of interest" description="Disordered" evidence="2">
    <location>
        <begin position="1"/>
        <end position="43"/>
    </location>
</feature>
<feature type="coiled-coil region" evidence="1">
    <location>
        <begin position="1"/>
        <end position="31"/>
    </location>
</feature>
<feature type="coiled-coil region" evidence="1">
    <location>
        <begin position="340"/>
        <end position="371"/>
    </location>
</feature>
<proteinExistence type="evidence at protein level"/>
<name>OSB1_DICDI</name>
<keyword id="KW-0175">Coiled coil</keyword>
<keyword id="KW-0963">Cytoplasm</keyword>
<keyword id="KW-1185">Reference proteome</keyword>
<evidence type="ECO:0000255" key="1"/>
<evidence type="ECO:0000256" key="2">
    <source>
        <dbReference type="SAM" id="MobiDB-lite"/>
    </source>
</evidence>
<evidence type="ECO:0000269" key="3">
    <source>
    </source>
</evidence>
<evidence type="ECO:0000305" key="4"/>
<sequence>MGKKDKNVSVEEEVDEAEIEKLAAENANKPAPQLTKEDLDAMDDAEPGTSRLALIGKMIKKVSIGTDISNISMPGSFILAKSTLSYFSDNFSSFFGELLKANKIDNELERMLQVQRYLFTTLKETEDTTRKPLNPILGETWQANIHVKDGDGNDVTDNYFFAEQISHHPPISSSTVYNKKEGVNCTFCLPVRSQFMGTYVKISFEGESHITFEKYDEKFTFVAPPMAIRIFRSFSEYVGKGILKSDKNDYLIKSTYTSKPLFGGVYNGFESKVYKGKEKLYKIKGTWSGDMKITNLKTNETTPFFTRPTESAKVVFPDDGNTLPTDSSVVWKGVFDASKKDDVKGMSQEKVKVEEEQRKLAHHRKNADEWKPVHFNKIDGRWQLVNLKD</sequence>
<protein>
    <recommendedName>
        <fullName>Oxysterol-binding protein 1</fullName>
    </recommendedName>
    <alternativeName>
        <fullName>OSBPa</fullName>
    </alternativeName>
</protein>
<accession>Q8MPQ7</accession>
<accession>Q54VW8</accession>
<comment type="function">
    <text evidence="3">May play a role in the regulation of the slug-fruiting body switch.</text>
</comment>
<comment type="subunit">
    <text evidence="3">Interacts with dstC.</text>
</comment>
<comment type="subcellular location">
    <subcellularLocation>
        <location evidence="3">Cytoplasm</location>
    </subcellularLocation>
    <text>Localizes predominantly to the cell periphery, but is also found in the perinuclear region in some cells.</text>
</comment>
<comment type="developmental stage">
    <text evidence="3">Developmentally regulated with a peak during culmination. Slightly enriched in pstO and rearguard cells.</text>
</comment>
<comment type="similarity">
    <text evidence="4">Belongs to the OSBP family.</text>
</comment>
<reference key="1">
    <citation type="journal article" date="2002" name="FEBS Lett.">
        <title>OSBPa, a predicted oxysterol binding protein of Dictyostelium, is required for regulated entry into culmination.</title>
        <authorList>
            <person name="Fukuzawa M."/>
            <person name="Williams J.G."/>
        </authorList>
    </citation>
    <scope>NUCLEOTIDE SEQUENCE [MRNA]</scope>
    <scope>FUNCTION</scope>
    <scope>SUBCELLULAR LOCATION</scope>
    <scope>INTERACTION WITH DSTC</scope>
    <scope>DEVELOPMENTAL STAGE</scope>
    <source>
        <strain>AX2</strain>
    </source>
</reference>
<reference key="2">
    <citation type="journal article" date="2005" name="Nature">
        <title>The genome of the social amoeba Dictyostelium discoideum.</title>
        <authorList>
            <person name="Eichinger L."/>
            <person name="Pachebat J.A."/>
            <person name="Gloeckner G."/>
            <person name="Rajandream M.A."/>
            <person name="Sucgang R."/>
            <person name="Berriman M."/>
            <person name="Song J."/>
            <person name="Olsen R."/>
            <person name="Szafranski K."/>
            <person name="Xu Q."/>
            <person name="Tunggal B."/>
            <person name="Kummerfeld S."/>
            <person name="Madera M."/>
            <person name="Konfortov B.A."/>
            <person name="Rivero F."/>
            <person name="Bankier A.T."/>
            <person name="Lehmann R."/>
            <person name="Hamlin N."/>
            <person name="Davies R."/>
            <person name="Gaudet P."/>
            <person name="Fey P."/>
            <person name="Pilcher K."/>
            <person name="Chen G."/>
            <person name="Saunders D."/>
            <person name="Sodergren E.J."/>
            <person name="Davis P."/>
            <person name="Kerhornou A."/>
            <person name="Nie X."/>
            <person name="Hall N."/>
            <person name="Anjard C."/>
            <person name="Hemphill L."/>
            <person name="Bason N."/>
            <person name="Farbrother P."/>
            <person name="Desany B."/>
            <person name="Just E."/>
            <person name="Morio T."/>
            <person name="Rost R."/>
            <person name="Churcher C.M."/>
            <person name="Cooper J."/>
            <person name="Haydock S."/>
            <person name="van Driessche N."/>
            <person name="Cronin A."/>
            <person name="Goodhead I."/>
            <person name="Muzny D.M."/>
            <person name="Mourier T."/>
            <person name="Pain A."/>
            <person name="Lu M."/>
            <person name="Harper D."/>
            <person name="Lindsay R."/>
            <person name="Hauser H."/>
            <person name="James K.D."/>
            <person name="Quiles M."/>
            <person name="Madan Babu M."/>
            <person name="Saito T."/>
            <person name="Buchrieser C."/>
            <person name="Wardroper A."/>
            <person name="Felder M."/>
            <person name="Thangavelu M."/>
            <person name="Johnson D."/>
            <person name="Knights A."/>
            <person name="Loulseged H."/>
            <person name="Mungall K.L."/>
            <person name="Oliver K."/>
            <person name="Price C."/>
            <person name="Quail M.A."/>
            <person name="Urushihara H."/>
            <person name="Hernandez J."/>
            <person name="Rabbinowitsch E."/>
            <person name="Steffen D."/>
            <person name="Sanders M."/>
            <person name="Ma J."/>
            <person name="Kohara Y."/>
            <person name="Sharp S."/>
            <person name="Simmonds M.N."/>
            <person name="Spiegler S."/>
            <person name="Tivey A."/>
            <person name="Sugano S."/>
            <person name="White B."/>
            <person name="Walker D."/>
            <person name="Woodward J.R."/>
            <person name="Winckler T."/>
            <person name="Tanaka Y."/>
            <person name="Shaulsky G."/>
            <person name="Schleicher M."/>
            <person name="Weinstock G.M."/>
            <person name="Rosenthal A."/>
            <person name="Cox E.C."/>
            <person name="Chisholm R.L."/>
            <person name="Gibbs R.A."/>
            <person name="Loomis W.F."/>
            <person name="Platzer M."/>
            <person name="Kay R.R."/>
            <person name="Williams J.G."/>
            <person name="Dear P.H."/>
            <person name="Noegel A.A."/>
            <person name="Barrell B.G."/>
            <person name="Kuspa A."/>
        </authorList>
    </citation>
    <scope>NUCLEOTIDE SEQUENCE [LARGE SCALE GENOMIC DNA]</scope>
    <source>
        <strain>AX4</strain>
    </source>
</reference>